<gene>
    <name evidence="1" type="primary">nusB</name>
    <name type="ordered locus">BCQ_3968</name>
</gene>
<keyword id="KW-0694">RNA-binding</keyword>
<keyword id="KW-0804">Transcription</keyword>
<keyword id="KW-0889">Transcription antitermination</keyword>
<keyword id="KW-0805">Transcription regulation</keyword>
<dbReference type="EMBL" id="CP000227">
    <property type="protein sequence ID" value="ACM14396.1"/>
    <property type="molecule type" value="Genomic_DNA"/>
</dbReference>
<dbReference type="SMR" id="B9IXH5"/>
<dbReference type="KEGG" id="bcq:BCQ_3968"/>
<dbReference type="HOGENOM" id="CLU_087843_3_3_9"/>
<dbReference type="Proteomes" id="UP000000441">
    <property type="component" value="Chromosome"/>
</dbReference>
<dbReference type="GO" id="GO:0005829">
    <property type="term" value="C:cytosol"/>
    <property type="evidence" value="ECO:0007669"/>
    <property type="project" value="TreeGrafter"/>
</dbReference>
<dbReference type="GO" id="GO:0003723">
    <property type="term" value="F:RNA binding"/>
    <property type="evidence" value="ECO:0007669"/>
    <property type="project" value="UniProtKB-UniRule"/>
</dbReference>
<dbReference type="GO" id="GO:0006353">
    <property type="term" value="P:DNA-templated transcription termination"/>
    <property type="evidence" value="ECO:0007669"/>
    <property type="project" value="UniProtKB-UniRule"/>
</dbReference>
<dbReference type="GO" id="GO:0031564">
    <property type="term" value="P:transcription antitermination"/>
    <property type="evidence" value="ECO:0007669"/>
    <property type="project" value="UniProtKB-KW"/>
</dbReference>
<dbReference type="CDD" id="cd00619">
    <property type="entry name" value="Terminator_NusB"/>
    <property type="match status" value="1"/>
</dbReference>
<dbReference type="FunFam" id="1.10.940.10:FF:000003">
    <property type="entry name" value="Transcription antitermination factor NusB"/>
    <property type="match status" value="1"/>
</dbReference>
<dbReference type="Gene3D" id="1.10.940.10">
    <property type="entry name" value="NusB-like"/>
    <property type="match status" value="1"/>
</dbReference>
<dbReference type="HAMAP" id="MF_00073">
    <property type="entry name" value="NusB"/>
    <property type="match status" value="1"/>
</dbReference>
<dbReference type="InterPro" id="IPR035926">
    <property type="entry name" value="NusB-like_sf"/>
</dbReference>
<dbReference type="InterPro" id="IPR011605">
    <property type="entry name" value="NusB_fam"/>
</dbReference>
<dbReference type="InterPro" id="IPR006027">
    <property type="entry name" value="NusB_RsmB_TIM44"/>
</dbReference>
<dbReference type="NCBIfam" id="TIGR01951">
    <property type="entry name" value="nusB"/>
    <property type="match status" value="1"/>
</dbReference>
<dbReference type="NCBIfam" id="NF001223">
    <property type="entry name" value="PRK00202.1-1"/>
    <property type="match status" value="1"/>
</dbReference>
<dbReference type="PANTHER" id="PTHR11078:SF3">
    <property type="entry name" value="ANTITERMINATION NUSB DOMAIN-CONTAINING PROTEIN"/>
    <property type="match status" value="1"/>
</dbReference>
<dbReference type="PANTHER" id="PTHR11078">
    <property type="entry name" value="N UTILIZATION SUBSTANCE PROTEIN B-RELATED"/>
    <property type="match status" value="1"/>
</dbReference>
<dbReference type="Pfam" id="PF01029">
    <property type="entry name" value="NusB"/>
    <property type="match status" value="1"/>
</dbReference>
<dbReference type="SUPFAM" id="SSF48013">
    <property type="entry name" value="NusB-like"/>
    <property type="match status" value="1"/>
</dbReference>
<protein>
    <recommendedName>
        <fullName evidence="1">Transcription antitermination protein NusB</fullName>
    </recommendedName>
    <alternativeName>
        <fullName evidence="1">Antitermination factor NusB</fullName>
    </alternativeName>
</protein>
<accession>B9IXH5</accession>
<organism>
    <name type="scientific">Bacillus cereus (strain Q1)</name>
    <dbReference type="NCBI Taxonomy" id="361100"/>
    <lineage>
        <taxon>Bacteria</taxon>
        <taxon>Bacillati</taxon>
        <taxon>Bacillota</taxon>
        <taxon>Bacilli</taxon>
        <taxon>Bacillales</taxon>
        <taxon>Bacillaceae</taxon>
        <taxon>Bacillus</taxon>
        <taxon>Bacillus cereus group</taxon>
    </lineage>
</organism>
<feature type="chain" id="PRO_1000192415" description="Transcription antitermination protein NusB">
    <location>
        <begin position="1"/>
        <end position="130"/>
    </location>
</feature>
<proteinExistence type="inferred from homology"/>
<evidence type="ECO:0000255" key="1">
    <source>
        <dbReference type="HAMAP-Rule" id="MF_00073"/>
    </source>
</evidence>
<name>NUSB_BACCQ</name>
<comment type="function">
    <text evidence="1">Involved in transcription antitermination. Required for transcription of ribosomal RNA (rRNA) genes. Binds specifically to the boxA antiterminator sequence of the ribosomal RNA (rrn) operons.</text>
</comment>
<comment type="similarity">
    <text evidence="1">Belongs to the NusB family.</text>
</comment>
<sequence length="130" mass="15132">MKRRTARERAMQALYQMDITGELEPKVAVENTLDEGEETNEFLESLVVGFVENKEVIDEAIRQNLKKWKLERISIVDRSILRVAVYEMKYMEEIPHNVTINEAIEIAKTFGDEESRRFINGVLSNIKDTL</sequence>
<reference key="1">
    <citation type="journal article" date="2009" name="J. Bacteriol.">
        <title>Complete genome sequence of the extremophilic Bacillus cereus strain Q1 with industrial applications.</title>
        <authorList>
            <person name="Xiong Z."/>
            <person name="Jiang Y."/>
            <person name="Qi D."/>
            <person name="Lu H."/>
            <person name="Yang F."/>
            <person name="Yang J."/>
            <person name="Chen L."/>
            <person name="Sun L."/>
            <person name="Xu X."/>
            <person name="Xue Y."/>
            <person name="Zhu Y."/>
            <person name="Jin Q."/>
        </authorList>
    </citation>
    <scope>NUCLEOTIDE SEQUENCE [LARGE SCALE GENOMIC DNA]</scope>
    <source>
        <strain>Q1</strain>
    </source>
</reference>